<comment type="miscellaneous">
    <text evidence="1">Completely overlaps the 25S rRNA gene.</text>
</comment>
<comment type="caution">
    <text evidence="2">Product of a dubious gene prediction unlikely to encode a functional protein. Because of that it is not part of the S.cerevisiae S288c complete/reference proteome set.</text>
</comment>
<name>YL54B_YEAST</name>
<accession>P0C5P9</accession>
<sequence>MLLLKSIRRHQDRSIVHLLRGPNLRSLSLRVWVLHPNTRIDVRLLGPCFKTGGI</sequence>
<dbReference type="EMBL" id="U53879">
    <property type="status" value="NOT_ANNOTATED_CDS"/>
    <property type="molecule type" value="Genomic_DNA"/>
</dbReference>
<dbReference type="EMBL" id="Z73326">
    <property type="status" value="NOT_ANNOTATED_CDS"/>
    <property type="molecule type" value="Genomic_DNA"/>
</dbReference>
<dbReference type="STRING" id="4932.YLR154W-B"/>
<dbReference type="PaxDb" id="4932-YLR154W-B"/>
<dbReference type="EnsemblFungi" id="YLR154W-B_mRNA">
    <property type="protein sequence ID" value="YLR154W-B"/>
    <property type="gene ID" value="YLR154W-B"/>
</dbReference>
<dbReference type="AGR" id="SGD:S000028563"/>
<dbReference type="SGD" id="S000028563">
    <property type="gene designation" value="YLR154W-B"/>
</dbReference>
<dbReference type="eggNOG" id="ENOG502SUMB">
    <property type="taxonomic scope" value="Eukaryota"/>
</dbReference>
<dbReference type="HOGENOM" id="CLU_3051681_0_0_1"/>
<protein>
    <recommendedName>
        <fullName>Putative uncharacterized protein YLR154W-B</fullName>
    </recommendedName>
</protein>
<feature type="chain" id="PRO_0000309047" description="Putative uncharacterized protein YLR154W-B">
    <location>
        <begin position="1"/>
        <end position="54"/>
    </location>
</feature>
<gene>
    <name type="ordered locus">YLR154W-B</name>
    <name type="ORF">smORF398</name>
</gene>
<proteinExistence type="uncertain"/>
<reference key="1">
    <citation type="journal article" date="1997" name="Nature">
        <title>The nucleotide sequence of Saccharomyces cerevisiae chromosome XII.</title>
        <authorList>
            <person name="Johnston M."/>
            <person name="Hillier L.W."/>
            <person name="Riles L."/>
            <person name="Albermann K."/>
            <person name="Andre B."/>
            <person name="Ansorge W."/>
            <person name="Benes V."/>
            <person name="Brueckner M."/>
            <person name="Delius H."/>
            <person name="Dubois E."/>
            <person name="Duesterhoeft A."/>
            <person name="Entian K.-D."/>
            <person name="Floeth M."/>
            <person name="Goffeau A."/>
            <person name="Hebling U."/>
            <person name="Heumann K."/>
            <person name="Heuss-Neitzel D."/>
            <person name="Hilbert H."/>
            <person name="Hilger F."/>
            <person name="Kleine K."/>
            <person name="Koetter P."/>
            <person name="Louis E.J."/>
            <person name="Messenguy F."/>
            <person name="Mewes H.-W."/>
            <person name="Miosga T."/>
            <person name="Moestl D."/>
            <person name="Mueller-Auer S."/>
            <person name="Nentwich U."/>
            <person name="Obermaier B."/>
            <person name="Piravandi E."/>
            <person name="Pohl T.M."/>
            <person name="Portetelle D."/>
            <person name="Purnelle B."/>
            <person name="Rechmann S."/>
            <person name="Rieger M."/>
            <person name="Rinke M."/>
            <person name="Rose M."/>
            <person name="Scharfe M."/>
            <person name="Scherens B."/>
            <person name="Scholler P."/>
            <person name="Schwager C."/>
            <person name="Schwarz S."/>
            <person name="Underwood A.P."/>
            <person name="Urrestarazu L.A."/>
            <person name="Vandenbol M."/>
            <person name="Verhasselt P."/>
            <person name="Vierendeels F."/>
            <person name="Voet M."/>
            <person name="Volckaert G."/>
            <person name="Voss H."/>
            <person name="Wambutt R."/>
            <person name="Wedler E."/>
            <person name="Wedler H."/>
            <person name="Zimmermann F.K."/>
            <person name="Zollner A."/>
            <person name="Hani J."/>
            <person name="Hoheisel J.D."/>
        </authorList>
    </citation>
    <scope>NUCLEOTIDE SEQUENCE [LARGE SCALE GENOMIC DNA]</scope>
    <source>
        <strain>ATCC 204508 / S288c</strain>
    </source>
</reference>
<reference key="2">
    <citation type="journal article" date="2014" name="G3 (Bethesda)">
        <title>The reference genome sequence of Saccharomyces cerevisiae: Then and now.</title>
        <authorList>
            <person name="Engel S.R."/>
            <person name="Dietrich F.S."/>
            <person name="Fisk D.G."/>
            <person name="Binkley G."/>
            <person name="Balakrishnan R."/>
            <person name="Costanzo M.C."/>
            <person name="Dwight S.S."/>
            <person name="Hitz B.C."/>
            <person name="Karra K."/>
            <person name="Nash R.S."/>
            <person name="Weng S."/>
            <person name="Wong E.D."/>
            <person name="Lloyd P."/>
            <person name="Skrzypek M.S."/>
            <person name="Miyasato S.R."/>
            <person name="Simison M."/>
            <person name="Cherry J.M."/>
        </authorList>
    </citation>
    <scope>GENOME REANNOTATION</scope>
    <source>
        <strain>ATCC 204508 / S288c</strain>
    </source>
</reference>
<reference key="3">
    <citation type="journal article" date="2003" name="Genome Res.">
        <title>Systematic discovery of new genes in the Saccharomyces cerevisiae genome.</title>
        <authorList>
            <person name="Kessler M.M."/>
            <person name="Zeng Q."/>
            <person name="Hogan S."/>
            <person name="Cook R."/>
            <person name="Morales A.J."/>
            <person name="Cottarel G."/>
        </authorList>
    </citation>
    <scope>GENOME REANNOTATION</scope>
</reference>
<organism>
    <name type="scientific">Saccharomyces cerevisiae (strain ATCC 204508 / S288c)</name>
    <name type="common">Baker's yeast</name>
    <dbReference type="NCBI Taxonomy" id="559292"/>
    <lineage>
        <taxon>Eukaryota</taxon>
        <taxon>Fungi</taxon>
        <taxon>Dikarya</taxon>
        <taxon>Ascomycota</taxon>
        <taxon>Saccharomycotina</taxon>
        <taxon>Saccharomycetes</taxon>
        <taxon>Saccharomycetales</taxon>
        <taxon>Saccharomycetaceae</taxon>
        <taxon>Saccharomyces</taxon>
    </lineage>
</organism>
<evidence type="ECO:0000305" key="1"/>
<evidence type="ECO:0000305" key="2">
    <source>
    </source>
</evidence>